<dbReference type="EC" id="3.4.22.-" evidence="8"/>
<dbReference type="EC" id="2.4.1.-" evidence="9 14 15 23 24 25 26"/>
<dbReference type="EMBL" id="X82638">
    <property type="protein sequence ID" value="CAA57959.1"/>
    <property type="molecule type" value="Genomic_DNA"/>
</dbReference>
<dbReference type="PIR" id="I40884">
    <property type="entry name" value="I40884"/>
</dbReference>
<dbReference type="PDB" id="2VKD">
    <property type="method" value="X-ray"/>
    <property type="resolution" value="2.53 A"/>
    <property type="chains" value="A/B/C=1-546"/>
</dbReference>
<dbReference type="PDB" id="2VKH">
    <property type="method" value="X-ray"/>
    <property type="resolution" value="2.30 A"/>
    <property type="chains" value="A/B/C=1-546"/>
</dbReference>
<dbReference type="PDB" id="2VL8">
    <property type="method" value="X-ray"/>
    <property type="resolution" value="2.31 A"/>
    <property type="chains" value="A/B/C=1-546"/>
</dbReference>
<dbReference type="PDBsum" id="2VKD"/>
<dbReference type="PDBsum" id="2VKH"/>
<dbReference type="PDBsum" id="2VL8"/>
<dbReference type="SMR" id="Q46342"/>
<dbReference type="IntAct" id="Q46342">
    <property type="interactions" value="4"/>
</dbReference>
<dbReference type="MINT" id="Q46342"/>
<dbReference type="CAZy" id="GT44">
    <property type="family name" value="Glycosyltransferase Family 44"/>
</dbReference>
<dbReference type="TCDB" id="1.C.57.1.3">
    <property type="family name" value="the clostridial cytotoxin (cct) family"/>
</dbReference>
<dbReference type="BRENDA" id="2.4.1.B62">
    <property type="organism ID" value="1514"/>
</dbReference>
<dbReference type="EvolutionaryTrace" id="Q46342"/>
<dbReference type="GO" id="GO:0005576">
    <property type="term" value="C:extracellular region"/>
    <property type="evidence" value="ECO:0007669"/>
    <property type="project" value="UniProtKB-SubCell"/>
</dbReference>
<dbReference type="GO" id="GO:0044164">
    <property type="term" value="C:host cell cytosol"/>
    <property type="evidence" value="ECO:0007669"/>
    <property type="project" value="UniProtKB-SubCell"/>
</dbReference>
<dbReference type="GO" id="GO:0044175">
    <property type="term" value="C:host cell endosome membrane"/>
    <property type="evidence" value="ECO:0007669"/>
    <property type="project" value="UniProtKB-SubCell"/>
</dbReference>
<dbReference type="GO" id="GO:0020002">
    <property type="term" value="C:host cell plasma membrane"/>
    <property type="evidence" value="ECO:0007669"/>
    <property type="project" value="UniProtKB-SubCell"/>
</dbReference>
<dbReference type="GO" id="GO:0016020">
    <property type="term" value="C:membrane"/>
    <property type="evidence" value="ECO:0007669"/>
    <property type="project" value="UniProtKB-KW"/>
</dbReference>
<dbReference type="GO" id="GO:0008234">
    <property type="term" value="F:cysteine-type peptidase activity"/>
    <property type="evidence" value="ECO:0007669"/>
    <property type="project" value="UniProtKB-KW"/>
</dbReference>
<dbReference type="GO" id="GO:0016757">
    <property type="term" value="F:glycosyltransferase activity"/>
    <property type="evidence" value="ECO:0007669"/>
    <property type="project" value="UniProtKB-KW"/>
</dbReference>
<dbReference type="GO" id="GO:0008289">
    <property type="term" value="F:lipid binding"/>
    <property type="evidence" value="ECO:0007669"/>
    <property type="project" value="UniProtKB-KW"/>
</dbReference>
<dbReference type="GO" id="GO:0046872">
    <property type="term" value="F:metal ion binding"/>
    <property type="evidence" value="ECO:0007669"/>
    <property type="project" value="UniProtKB-KW"/>
</dbReference>
<dbReference type="GO" id="GO:0090729">
    <property type="term" value="F:toxin activity"/>
    <property type="evidence" value="ECO:0007669"/>
    <property type="project" value="UniProtKB-KW"/>
</dbReference>
<dbReference type="GO" id="GO:0006508">
    <property type="term" value="P:proteolysis"/>
    <property type="evidence" value="ECO:0007669"/>
    <property type="project" value="UniProtKB-KW"/>
</dbReference>
<dbReference type="CDD" id="cd20502">
    <property type="entry name" value="C80_toxinA_B-like"/>
    <property type="match status" value="1"/>
</dbReference>
<dbReference type="CDD" id="cd16840">
    <property type="entry name" value="toxin_MLD"/>
    <property type="match status" value="1"/>
</dbReference>
<dbReference type="Gene3D" id="1.10.10.1780">
    <property type="match status" value="1"/>
</dbReference>
<dbReference type="Gene3D" id="1.10.274.80">
    <property type="match status" value="1"/>
</dbReference>
<dbReference type="Gene3D" id="1.10.3730.30">
    <property type="match status" value="1"/>
</dbReference>
<dbReference type="Gene3D" id="1.20.58.1190">
    <property type="match status" value="1"/>
</dbReference>
<dbReference type="Gene3D" id="3.40.50.11050">
    <property type="match status" value="1"/>
</dbReference>
<dbReference type="Gene3D" id="2.10.270.10">
    <property type="entry name" value="Cholin Binding"/>
    <property type="match status" value="6"/>
</dbReference>
<dbReference type="InterPro" id="IPR018337">
    <property type="entry name" value="Cell_wall/Cho-bd_repeat"/>
</dbReference>
<dbReference type="InterPro" id="IPR020974">
    <property type="entry name" value="CPD_dom"/>
</dbReference>
<dbReference type="InterPro" id="IPR038383">
    <property type="entry name" value="CPD_dom_sf"/>
</dbReference>
<dbReference type="InterPro" id="IPR020972">
    <property type="entry name" value="Dermonecrotic/RTX_toxin_MLD"/>
</dbReference>
<dbReference type="InterPro" id="IPR029044">
    <property type="entry name" value="Nucleotide-diphossugar_trans"/>
</dbReference>
<dbReference type="InterPro" id="IPR024770">
    <property type="entry name" value="TcdA/TcdB_cat"/>
</dbReference>
<dbReference type="InterPro" id="IPR024772">
    <property type="entry name" value="TcdA/TcdB_N"/>
</dbReference>
<dbReference type="InterPro" id="IPR024769">
    <property type="entry name" value="TcdA/TcdB_pore_forming"/>
</dbReference>
<dbReference type="Pfam" id="PF01473">
    <property type="entry name" value="Choline_bind_1"/>
    <property type="match status" value="7"/>
</dbReference>
<dbReference type="Pfam" id="PF19127">
    <property type="entry name" value="Choline_bind_3"/>
    <property type="match status" value="1"/>
</dbReference>
<dbReference type="Pfam" id="PF11647">
    <property type="entry name" value="MLD"/>
    <property type="match status" value="1"/>
</dbReference>
<dbReference type="Pfam" id="PF11713">
    <property type="entry name" value="Peptidase_C80"/>
    <property type="match status" value="1"/>
</dbReference>
<dbReference type="Pfam" id="PF12919">
    <property type="entry name" value="TcdA_TcdB"/>
    <property type="match status" value="1"/>
</dbReference>
<dbReference type="Pfam" id="PF12920">
    <property type="entry name" value="TcdA_TcdB_pore"/>
    <property type="match status" value="1"/>
</dbReference>
<dbReference type="Pfam" id="PF12918">
    <property type="entry name" value="TcdB_N"/>
    <property type="match status" value="1"/>
</dbReference>
<dbReference type="SUPFAM" id="SSF69360">
    <property type="entry name" value="Cell wall binding repeat"/>
    <property type="match status" value="4"/>
</dbReference>
<dbReference type="SUPFAM" id="SSF53448">
    <property type="entry name" value="Nucleotide-diphospho-sugar transferases"/>
    <property type="match status" value="1"/>
</dbReference>
<dbReference type="PROSITE" id="PS51771">
    <property type="entry name" value="CGT_MARTX_CPD"/>
    <property type="match status" value="1"/>
</dbReference>
<dbReference type="PROSITE" id="PS51170">
    <property type="entry name" value="CW"/>
    <property type="match status" value="20"/>
</dbReference>
<organism>
    <name type="scientific">Paraclostridium sordellii</name>
    <name type="common">Clostridium sordellii</name>
    <dbReference type="NCBI Taxonomy" id="1505"/>
    <lineage>
        <taxon>Bacteria</taxon>
        <taxon>Bacillati</taxon>
        <taxon>Bacillota</taxon>
        <taxon>Clostridia</taxon>
        <taxon>Peptostreptococcales</taxon>
        <taxon>Peptostreptococcaceae</taxon>
        <taxon>Paraclostridium</taxon>
    </lineage>
</organism>
<keyword id="KW-0002">3D-structure</keyword>
<keyword id="KW-0068">Autocatalytic cleavage</keyword>
<keyword id="KW-0328">Glycosyltransferase</keyword>
<keyword id="KW-1032">Host cell membrane</keyword>
<keyword id="KW-1035">Host cytoplasm</keyword>
<keyword id="KW-1039">Host endosome</keyword>
<keyword id="KW-1043">Host membrane</keyword>
<keyword id="KW-0378">Hydrolase</keyword>
<keyword id="KW-0446">Lipid-binding</keyword>
<keyword id="KW-0460">Magnesium</keyword>
<keyword id="KW-0464">Manganese</keyword>
<keyword id="KW-0472">Membrane</keyword>
<keyword id="KW-0479">Metal-binding</keyword>
<keyword id="KW-0645">Protease</keyword>
<keyword id="KW-0677">Repeat</keyword>
<keyword id="KW-0964">Secreted</keyword>
<keyword id="KW-0788">Thiol protease</keyword>
<keyword id="KW-0800">Toxin</keyword>
<keyword id="KW-0808">Transferase</keyword>
<keyword id="KW-0843">Virulence</keyword>
<keyword id="KW-0862">Zinc</keyword>
<evidence type="ECO:0000250" key="1">
    <source>
        <dbReference type="UniProtKB" id="P0DUB4"/>
    </source>
</evidence>
<evidence type="ECO:0000250" key="2">
    <source>
        <dbReference type="UniProtKB" id="P16154"/>
    </source>
</evidence>
<evidence type="ECO:0000250" key="3">
    <source>
        <dbReference type="UniProtKB" id="P18177"/>
    </source>
</evidence>
<evidence type="ECO:0000250" key="4">
    <source>
        <dbReference type="UniProtKB" id="T0D3N5"/>
    </source>
</evidence>
<evidence type="ECO:0000255" key="5"/>
<evidence type="ECO:0000255" key="6">
    <source>
        <dbReference type="PROSITE-ProRule" id="PRU00591"/>
    </source>
</evidence>
<evidence type="ECO:0000255" key="7">
    <source>
        <dbReference type="PROSITE-ProRule" id="PRU01107"/>
    </source>
</evidence>
<evidence type="ECO:0000269" key="8">
    <source>
    </source>
</evidence>
<evidence type="ECO:0000269" key="9">
    <source>
    </source>
</evidence>
<evidence type="ECO:0000269" key="10">
    <source>
    </source>
</evidence>
<evidence type="ECO:0000269" key="11">
    <source>
    </source>
</evidence>
<evidence type="ECO:0000269" key="12">
    <source>
    </source>
</evidence>
<evidence type="ECO:0000269" key="13">
    <source>
    </source>
</evidence>
<evidence type="ECO:0000269" key="14">
    <source>
    </source>
</evidence>
<evidence type="ECO:0000269" key="15">
    <source>
    </source>
</evidence>
<evidence type="ECO:0000269" key="16">
    <source>
    </source>
</evidence>
<evidence type="ECO:0000269" key="17">
    <source>
    </source>
</evidence>
<evidence type="ECO:0000269" key="18">
    <source>
    </source>
</evidence>
<evidence type="ECO:0000269" key="19">
    <source>
    </source>
</evidence>
<evidence type="ECO:0000269" key="20">
    <source>
    </source>
</evidence>
<evidence type="ECO:0000269" key="21">
    <source>
    </source>
</evidence>
<evidence type="ECO:0000269" key="22">
    <source>
    </source>
</evidence>
<evidence type="ECO:0000269" key="23">
    <source>
    </source>
</evidence>
<evidence type="ECO:0000269" key="24">
    <source>
    </source>
</evidence>
<evidence type="ECO:0000269" key="25">
    <source>
    </source>
</evidence>
<evidence type="ECO:0000269" key="26">
    <source>
    </source>
</evidence>
<evidence type="ECO:0000303" key="27">
    <source>
    </source>
</evidence>
<evidence type="ECO:0000303" key="28">
    <source>
    </source>
</evidence>
<evidence type="ECO:0000303" key="29">
    <source>
    </source>
</evidence>
<evidence type="ECO:0000303" key="30">
    <source>
    </source>
</evidence>
<evidence type="ECO:0000303" key="31">
    <source>
    </source>
</evidence>
<evidence type="ECO:0000303" key="32">
    <source>
    </source>
</evidence>
<evidence type="ECO:0000305" key="33"/>
<evidence type="ECO:0000305" key="34">
    <source>
    </source>
</evidence>
<evidence type="ECO:0000305" key="35">
    <source>
    </source>
</evidence>
<evidence type="ECO:0007744" key="36">
    <source>
        <dbReference type="PDB" id="2VKD"/>
    </source>
</evidence>
<evidence type="ECO:0007744" key="37">
    <source>
        <dbReference type="PDB" id="2VKH"/>
    </source>
</evidence>
<evidence type="ECO:0007744" key="38">
    <source>
        <dbReference type="PDB" id="2VL8"/>
    </source>
</evidence>
<evidence type="ECO:0007829" key="39">
    <source>
        <dbReference type="PDB" id="2VKD"/>
    </source>
</evidence>
<evidence type="ECO:0007829" key="40">
    <source>
        <dbReference type="PDB" id="2VKH"/>
    </source>
</evidence>
<evidence type="ECO:0007829" key="41">
    <source>
        <dbReference type="PDB" id="2VL8"/>
    </source>
</evidence>
<accession>Q46342</accession>
<protein>
    <recommendedName>
        <fullName evidence="30">Cytotoxin-L</fullName>
        <ecNumber evidence="8">3.4.22.-</ecNumber>
    </recommendedName>
    <alternativeName>
        <fullName evidence="31 32">Lethal toxin</fullName>
        <shortName evidence="31 32">LT</shortName>
    </alternativeName>
    <component>
        <recommendedName>
            <fullName evidence="33">Glucosyltransferase TcsL</fullName>
            <ecNumber evidence="9 14 15 23 24 25 26">2.4.1.-</ecNumber>
        </recommendedName>
    </component>
</protein>
<sequence length="2364" mass="270580">MNLVNKAQLQKMVYVKFRIQEDEYVAILNALEEYHNMSESSVVEKYLKLKDINNLTDNYLNTYKKSGRNKALKKFKEYLTMEVLELKNNSLTPVEKNLHFIWIGGQINDTAINYINQWKDVNSDYTVKVFYDSNAFLINTLKKTIVESATNNTLESFRENLNDPEFDYNKFYRKRMEIIYDKQKHFIDYYKSQIEENPEFIIDNIIKTYLSNEYSKDLEALNKYIEESLNKITANNGNDIRNLEKFADEDLVRLYNQELVERWNLAAASDILRISMLKEDGGVYLDVDILPGIQPDLFKSINKPDSITNTSWEMIKLEAIMKYKEYIPGYTSKNFDMLDEEVQRSFESALSSKSDKSEIFLPLDDIKVSPLEVKIAFANNSVINQALISLKDSYCSDLVINQIKNRYKILNDNLNPSINEGTDFNTTMKIFSDKLASISNEDNMMFMIKITNYLKVGFAPDVRSTINLSGPGVYTGAYQDLLMFKDNSTNIHLLEPELRNFEFPKTKISQLTEQEITSLWSFNQARAKSQFEEYKKGYFEGALGEDDNLDFAQNTVLDKDYVSKKILSSMKTRNKEYIHYIVQLQGDKISYEASCNLFSKDPYSSILYQKNIEGSETAYYYYVADAEIKEIDKYRIPYQISNKRNIKLTFIGHGKSEFNTDTFANLDVDSLSSEIETILNLAKADISPKYIEINLLGCNMFSYSISAEETYPGKLLLKIKDRVSELMPSISQDSITVSANQYEVRINEEGKREILDHSGKWINKEESIIKDISSKEYISFNPKENKIIVKSKYLHELSTLLQEIRNNANSSDIDLEKKVMLTECEINVASNIDRQIVEGRIEEAKNLTSDSINYIKNEFKLIESISDSLYDLKHQNGLDDSHFISFEDISKTENGFRIRFINKETGNSIFIETEKEIFSEYATHISKEISNIKDTIFDNVNGKLVKKVNLDAAHEVNTLNSAFFIQSLIEYNTTKESLSNLSVAMKVQVYAQLFSTGLNTITDASKVVELVSTALDETIDLLPTLSEGLPIIATIIDGVSLGAAIKELSETNDPLLRQEIEAKIGIMAVNLTAASTAIVTSALGIASGFSILLVPLAGISAGIPSLVNNELILQDKATKVIDYFKHISLAETEGAFTLLDDKIIMPQDDLVLSEIDFNNNSITLGKCEIWRAEGGSGHTLTDDIDHFFSSPSITYRKPWLSIYDVLNIKKEKIDFSKDLMVLPNAPNRVFGYEMGWTPGFRSLDNDGTKLLDRIRDHYEGQFYWRYFAFIADALITKLKPRYEDTNVRINLDGNTRSFIVPVITTEQIRKNLSYSFYGSGGSYSLSLSPYNMNIDLNLVENDTWVIDVDNVVKNITIESDEIQKGELIENILSKLNIEDNKIILNNHTINFYGDINESNRFISLTFSILEDINIIIEIDLVSKSYKILLSGNCMKLIENSSDIQQKIDHIGFNGEHQKYIPYSYIDNETKYNGFIDYSKKEGLFTAEFSNESIIRNIYMPDSNNLFIYSSKDLKDIRIINKGDVKLLIGNYFKDDMKVSLSFTIEDTNTIKLNGVYLDENGVAQILKFMNNAKSALNTSNSLMNFLESINIKNIFYNNLDPNIEFILDTNFIISGSNSIGQFELICDKDKNIQPYFINFKIKETSYTLYVGNRQNLIVEPSYHLDDSGNISSTVINFSQKYLYGIDRYVNKVIIAPNLYTDEINITPVYKPNYICPEVIILDANYINEKINVNINDLSIRYVWDNDGSDLILIANSEEDNQPQVKIRFVNVFKSDTAADKLSFNFSDKQDVSVSKIISTFSLAAYSDGFFDYEFGLVSLDNDYFYINSFGNMVSGLIYINDSLYYFKPPKNNLITGFTTIDGNKYYFDPTKSGAASIGEITIDGKDYYFNKQGILQVGVINTSDGLKYFAPAGTLDENLEGESVNFIGKLNIDGKIYYFEDNYRAAVEWKLLDDETYYFNPKTGEALKGLHQIGDNKYYFDDNGIMQTGFITINDKVFYFNNDGVMQVGYIEVNGKYFYFGKNGERQLGVFNTPDGFKFFGPKDDDLGTEEGELTLYNGILNFNGKIYFFDISNTAVVGWGTLDDGSTYYFDDNRAEACIGLTVINDCKYYFDDNGIRQLGFITINDNIFYFSESGKIELGYQNINGNYFYIDESGLVLIGVFDTPDGYKYFAPLNTVNDNIYGQAVKYSGLVRVNEDVYYFGETYKIETGWIENETDKYYFDPETKKAYKGINVVDDIKYYFDENGIMRTGLISFENNNYYFNEDGKMQFGYLNIKDKMFYFGKDGKMQIGVFNTPDGFKYFAHQNTLDENFEGESINYTGWLDLDGKRYYFTDEYIAATGSLTIDGYNYYFDPDTAELVVSE</sequence>
<proteinExistence type="evidence at protein level"/>
<feature type="chain" id="PRO_0000451197" description="Cytotoxin-L">
    <location>
        <begin position="1"/>
        <end position="2364"/>
    </location>
</feature>
<feature type="chain" id="PRO_0000451198" description="Glucosyltransferase TcsL" evidence="3">
    <location>
        <begin position="1"/>
        <end position="543"/>
    </location>
</feature>
<feature type="domain" description="GT44" evidence="5">
    <location>
        <begin position="96"/>
        <end position="468"/>
    </location>
</feature>
<feature type="domain" description="Peptidase C80" evidence="7">
    <location>
        <begin position="567"/>
        <end position="774"/>
    </location>
</feature>
<feature type="repeat" description="Cell wall-binding 1" evidence="6">
    <location>
        <begin position="1813"/>
        <end position="1832"/>
    </location>
</feature>
<feature type="repeat" description="Cell wall-binding 2" evidence="6">
    <location>
        <begin position="1833"/>
        <end position="1852"/>
    </location>
</feature>
<feature type="repeat" description="Cell wall-binding 3" evidence="6">
    <location>
        <begin position="1854"/>
        <end position="1873"/>
    </location>
</feature>
<feature type="repeat" description="Cell wall-binding 4" evidence="6">
    <location>
        <begin position="1876"/>
        <end position="1895"/>
    </location>
</feature>
<feature type="repeat" description="Cell wall-binding 5" evidence="6">
    <location>
        <begin position="1926"/>
        <end position="1945"/>
    </location>
</feature>
<feature type="repeat" description="Cell wall-binding 6" evidence="6">
    <location>
        <begin position="1946"/>
        <end position="1965"/>
    </location>
</feature>
<feature type="repeat" description="Cell wall-binding 7" evidence="6">
    <location>
        <begin position="1967"/>
        <end position="1986"/>
    </location>
</feature>
<feature type="repeat" description="Cell wall-binding 8" evidence="6">
    <location>
        <begin position="1987"/>
        <end position="2006"/>
    </location>
</feature>
<feature type="repeat" description="Cell wall-binding 9" evidence="6">
    <location>
        <begin position="2007"/>
        <end position="2026"/>
    </location>
</feature>
<feature type="repeat" description="Cell wall-binding 10" evidence="6">
    <location>
        <begin position="2057"/>
        <end position="2076"/>
    </location>
</feature>
<feature type="repeat" description="Cell wall-binding 11" evidence="6">
    <location>
        <begin position="2077"/>
        <end position="2097"/>
    </location>
</feature>
<feature type="repeat" description="Cell wall-binding 12" evidence="6">
    <location>
        <begin position="2099"/>
        <end position="2118"/>
    </location>
</feature>
<feature type="repeat" description="Cell wall-binding 13" evidence="6">
    <location>
        <begin position="2119"/>
        <end position="2138"/>
    </location>
</feature>
<feature type="repeat" description="Cell wall-binding 14" evidence="6">
    <location>
        <begin position="2139"/>
        <end position="2158"/>
    </location>
</feature>
<feature type="repeat" description="Cell wall-binding 15" evidence="6">
    <location>
        <begin position="2209"/>
        <end position="2224"/>
    </location>
</feature>
<feature type="repeat" description="Cell wall-binding 16" evidence="6">
    <location>
        <begin position="2227"/>
        <end position="2249"/>
    </location>
</feature>
<feature type="repeat" description="Cell wall-binding 17" evidence="6">
    <location>
        <begin position="2250"/>
        <end position="2269"/>
    </location>
</feature>
<feature type="repeat" description="Cell wall-binding 18" evidence="6">
    <location>
        <begin position="2270"/>
        <end position="2289"/>
    </location>
</feature>
<feature type="repeat" description="Cell wall-binding 19" evidence="6">
    <location>
        <begin position="2320"/>
        <end position="2339"/>
    </location>
</feature>
<feature type="repeat" description="Cell wall-binding 20" evidence="6">
    <location>
        <begin position="2340"/>
        <end position="2359"/>
    </location>
</feature>
<feature type="region of interest" description="Four-helical bundle" evidence="18">
    <location>
        <begin position="1"/>
        <end position="91"/>
    </location>
</feature>
<feature type="region of interest" description="Glucosyltransferase region" evidence="29">
    <location>
        <begin position="96"/>
        <end position="468"/>
    </location>
</feature>
<feature type="region of interest" description="Autoprocessing region" evidence="29">
    <location>
        <begin position="544"/>
        <end position="799"/>
    </location>
</feature>
<feature type="region of interest" description="Translocation region" evidence="29">
    <location>
        <begin position="800"/>
        <end position="1500"/>
    </location>
</feature>
<feature type="region of interest" description="Interaction with host SEMA6A and SEMA6B" evidence="1">
    <location>
        <begin position="1433"/>
        <end position="1438"/>
    </location>
</feature>
<feature type="region of interest" description="Interaction with host SEMA6A and SEMA6B" evidence="1">
    <location>
        <begin position="1466"/>
        <end position="1471"/>
    </location>
</feature>
<feature type="region of interest" description="Interaction with host SEMA6A and SEMA6B" evidence="1">
    <location>
        <begin position="1484"/>
        <end position="1495"/>
    </location>
</feature>
<feature type="region of interest" description="Interaction with host SEMA6A and SEMA6B" evidence="1">
    <location>
        <begin position="1504"/>
        <end position="1511"/>
    </location>
</feature>
<feature type="region of interest" description="Interaction with host SEMA6A and SEMA6B" evidence="1">
    <location>
        <begin position="1596"/>
        <end position="1601"/>
    </location>
</feature>
<feature type="region of interest" description="Receptor-binding (CROPS) region" evidence="29">
    <location>
        <begin position="1835"/>
        <end position="2364"/>
    </location>
</feature>
<feature type="active site" description="For protease activity" evidence="7">
    <location>
        <position position="653"/>
    </location>
</feature>
<feature type="active site" description="Nucleophile; for protease activity" evidence="7 34">
    <location>
        <position position="698"/>
    </location>
</feature>
<feature type="binding site" evidence="11 12 36 37 38">
    <location>
        <begin position="101"/>
        <end position="103"/>
    </location>
    <ligand>
        <name>UDP-alpha-D-glucose</name>
        <dbReference type="ChEBI" id="CHEBI:58885"/>
    </ligand>
</feature>
<feature type="binding site" evidence="11 12 36 37 38">
    <location>
        <position position="139"/>
    </location>
    <ligand>
        <name>UDP-alpha-D-glucose</name>
        <dbReference type="ChEBI" id="CHEBI:58885"/>
    </ligand>
</feature>
<feature type="binding site" evidence="11 12 36 37 38">
    <location>
        <begin position="265"/>
        <end position="270"/>
    </location>
    <ligand>
        <name>UDP-alpha-D-glucose</name>
        <dbReference type="ChEBI" id="CHEBI:58885"/>
    </ligand>
</feature>
<feature type="binding site" evidence="11 12 36 37 38">
    <location>
        <begin position="286"/>
        <end position="288"/>
    </location>
    <ligand>
        <name>UDP-alpha-D-glucose</name>
        <dbReference type="ChEBI" id="CHEBI:58885"/>
    </ligand>
</feature>
<feature type="binding site" evidence="11 36 37">
    <location>
        <position position="288"/>
    </location>
    <ligand>
        <name>Mg(2+)</name>
        <dbReference type="ChEBI" id="CHEBI:18420"/>
    </ligand>
</feature>
<feature type="binding site" evidence="11 36 37">
    <location>
        <position position="515"/>
    </location>
    <ligand>
        <name>Mg(2+)</name>
        <dbReference type="ChEBI" id="CHEBI:18420"/>
    </ligand>
</feature>
<feature type="binding site" evidence="11 36 37">
    <location>
        <begin position="518"/>
        <end position="520"/>
    </location>
    <ligand>
        <name>UDP-alpha-D-glucose</name>
        <dbReference type="ChEBI" id="CHEBI:58885"/>
    </ligand>
</feature>
<feature type="binding site" evidence="11 12 37 38">
    <location>
        <position position="518"/>
    </location>
    <ligand>
        <name>Mg(2+)</name>
        <dbReference type="ChEBI" id="CHEBI:18420"/>
    </ligand>
</feature>
<feature type="binding site" evidence="2">
    <location>
        <position position="545"/>
    </location>
    <ligand>
        <name>Zn(2+)</name>
        <dbReference type="ChEBI" id="CHEBI:29105"/>
    </ligand>
</feature>
<feature type="binding site" evidence="3">
    <location>
        <position position="546"/>
    </location>
    <ligand>
        <name>Zn(2+)</name>
        <dbReference type="ChEBI" id="CHEBI:29105"/>
    </ligand>
</feature>
<feature type="binding site" evidence="2">
    <location>
        <position position="577"/>
    </location>
    <ligand>
        <name>1D-myo-inositol hexakisphosphate</name>
        <dbReference type="ChEBI" id="CHEBI:58130"/>
    </ligand>
</feature>
<feature type="binding site" evidence="2">
    <location>
        <position position="600"/>
    </location>
    <ligand>
        <name>1D-myo-inositol hexakisphosphate</name>
        <dbReference type="ChEBI" id="CHEBI:58130"/>
    </ligand>
</feature>
<feature type="binding site" evidence="2">
    <location>
        <position position="647"/>
    </location>
    <ligand>
        <name>1D-myo-inositol hexakisphosphate</name>
        <dbReference type="ChEBI" id="CHEBI:58130"/>
    </ligand>
</feature>
<feature type="binding site" evidence="3">
    <location>
        <position position="653"/>
    </location>
    <ligand>
        <name>Zn(2+)</name>
        <dbReference type="ChEBI" id="CHEBI:29105"/>
    </ligand>
</feature>
<feature type="binding site" evidence="3">
    <location>
        <position position="757"/>
    </location>
    <ligand>
        <name>Zn(2+)</name>
        <dbReference type="ChEBI" id="CHEBI:29105"/>
    </ligand>
</feature>
<feature type="binding site" evidence="2">
    <location>
        <position position="764"/>
    </location>
    <ligand>
        <name>1D-myo-inositol hexakisphosphate</name>
        <dbReference type="ChEBI" id="CHEBI:58130"/>
    </ligand>
</feature>
<feature type="binding site" evidence="2">
    <location>
        <position position="775"/>
    </location>
    <ligand>
        <name>1D-myo-inositol hexakisphosphate</name>
        <dbReference type="ChEBI" id="CHEBI:58130"/>
    </ligand>
</feature>
<feature type="binding site" evidence="2">
    <location>
        <position position="792"/>
    </location>
    <ligand>
        <name>1D-myo-inositol hexakisphosphate</name>
        <dbReference type="ChEBI" id="CHEBI:58130"/>
    </ligand>
</feature>
<feature type="site" description="Cleavage; by autolysis" evidence="3">
    <location>
        <begin position="543"/>
        <end position="544"/>
    </location>
</feature>
<feature type="mutagenesis site" description="Does not affect phospholipid-binding and cytotoxicity." evidence="18">
    <original>Q</original>
    <variation>A</variation>
    <location>
        <position position="10"/>
    </location>
</feature>
<feature type="mutagenesis site" description="Slightly reduced phospholipid-binding and impaired cytotoxicity." evidence="18">
    <original>K</original>
    <variation>I</variation>
    <location>
        <position position="11"/>
    </location>
</feature>
<feature type="mutagenesis site" description="Strongly reduced phospholipid-binding without affecting cytotoxicity." evidence="18">
    <original>Y</original>
    <variation>A</variation>
    <location>
        <position position="14"/>
    </location>
</feature>
<feature type="mutagenesis site" description="Strongly reduced phospholipid-binding and impaired cytotoxicity." evidence="18">
    <original>V</original>
    <variation>S</variation>
    <location>
        <position position="15"/>
    </location>
</feature>
<feature type="mutagenesis site" description="Slightly reduced phospholipid-binding." evidence="18">
    <original>K</original>
    <variation>I</variation>
    <location>
        <position position="16"/>
    </location>
</feature>
<feature type="mutagenesis site" description="Impaired localization to host cell membrane, leading to impaired cytotoxicity." evidence="20">
    <original>FR</original>
    <variation>NA</variation>
    <location>
        <begin position="17"/>
        <end position="18"/>
    </location>
</feature>
<feature type="mutagenesis site" description="Strongly reduced phospholipid-binding and impaired cytotoxicity." evidence="18">
    <original>F</original>
    <variation>K</variation>
    <location>
        <position position="17"/>
    </location>
</feature>
<feature type="mutagenesis site" description="Strongly reduced phospholipid-binding and impaired cytotoxicity." evidence="18">
    <original>R</original>
    <variation>P</variation>
    <location>
        <position position="18"/>
    </location>
</feature>
<feature type="mutagenesis site" description="Slightly reduced phospholipid-binding without affecting cytotoxicity." evidence="18">
    <original>Q</original>
    <variation>A</variation>
    <location>
        <position position="20"/>
    </location>
</feature>
<feature type="mutagenesis site" description="Does not affect phospholipid-binding and cytotoxicity." evidence="18">
    <original>S</original>
    <variation>A</variation>
    <location>
        <position position="38"/>
    </location>
</feature>
<feature type="mutagenesis site" description="Strongly reduced phospholipid-binding without affecting cytotoxicity." evidence="18">
    <original>R</original>
    <variation>A</variation>
    <location>
        <position position="68"/>
    </location>
</feature>
<feature type="mutagenesis site" description="Does not affect phospholipid-binding and cytotoxicity." evidence="18">
    <original>Y</original>
    <variation>A</variation>
    <location>
        <position position="78"/>
    </location>
</feature>
<feature type="mutagenesis site" description="Abolished glucosyltransferase activity without affecting localization to the host cell membrane." evidence="16 18 20">
    <original>DVD</original>
    <variation>NVN</variation>
    <location>
        <begin position="286"/>
        <end position="288"/>
    </location>
</feature>
<feature type="mutagenesis site" description="Abolished autoprocessing, leading to impaired cytotoxicity." evidence="20">
    <original>C</original>
    <variation>A</variation>
    <location>
        <position position="698"/>
    </location>
</feature>
<feature type="helix" evidence="40">
    <location>
        <begin position="6"/>
        <end position="12"/>
    </location>
</feature>
<feature type="helix" evidence="40">
    <location>
        <begin position="22"/>
        <end position="35"/>
    </location>
</feature>
<feature type="helix" evidence="40">
    <location>
        <begin position="42"/>
        <end position="62"/>
    </location>
</feature>
<feature type="helix" evidence="40">
    <location>
        <begin position="69"/>
        <end position="88"/>
    </location>
</feature>
<feature type="strand" evidence="40">
    <location>
        <begin position="96"/>
        <end position="101"/>
    </location>
</feature>
<feature type="helix" evidence="40">
    <location>
        <begin position="109"/>
        <end position="121"/>
    </location>
</feature>
<feature type="strand" evidence="40">
    <location>
        <begin position="125"/>
        <end position="131"/>
    </location>
</feature>
<feature type="helix" evidence="40">
    <location>
        <begin position="138"/>
        <end position="157"/>
    </location>
</feature>
<feature type="helix" evidence="40">
    <location>
        <begin position="158"/>
        <end position="160"/>
    </location>
</feature>
<feature type="strand" evidence="40">
    <location>
        <begin position="161"/>
        <end position="164"/>
    </location>
</feature>
<feature type="helix" evidence="40">
    <location>
        <begin position="168"/>
        <end position="196"/>
    </location>
</feature>
<feature type="helix" evidence="40">
    <location>
        <begin position="202"/>
        <end position="213"/>
    </location>
</feature>
<feature type="helix" evidence="40">
    <location>
        <begin position="218"/>
        <end position="233"/>
    </location>
</feature>
<feature type="turn" evidence="40">
    <location>
        <begin position="234"/>
        <end position="236"/>
    </location>
</feature>
<feature type="strand" evidence="40">
    <location>
        <begin position="237"/>
        <end position="239"/>
    </location>
</feature>
<feature type="turn" evidence="40">
    <location>
        <begin position="240"/>
        <end position="242"/>
    </location>
</feature>
<feature type="helix" evidence="40">
    <location>
        <begin position="249"/>
        <end position="260"/>
    </location>
</feature>
<feature type="helix" evidence="40">
    <location>
        <begin position="265"/>
        <end position="280"/>
    </location>
</feature>
<feature type="strand" evidence="40">
    <location>
        <begin position="282"/>
        <end position="285"/>
    </location>
</feature>
<feature type="helix" evidence="39">
    <location>
        <begin position="295"/>
        <end position="298"/>
    </location>
</feature>
<feature type="helix" evidence="40">
    <location>
        <begin position="309"/>
        <end position="324"/>
    </location>
</feature>
<feature type="helix" evidence="40">
    <location>
        <begin position="335"/>
        <end position="337"/>
    </location>
</feature>
<feature type="helix" evidence="40">
    <location>
        <begin position="340"/>
        <end position="351"/>
    </location>
</feature>
<feature type="helix" evidence="40">
    <location>
        <begin position="356"/>
        <end position="358"/>
    </location>
</feature>
<feature type="strand" evidence="40">
    <location>
        <begin position="374"/>
        <end position="378"/>
    </location>
</feature>
<feature type="strand" evidence="40">
    <location>
        <begin position="381"/>
        <end position="389"/>
    </location>
</feature>
<feature type="helix" evidence="40">
    <location>
        <begin position="394"/>
        <end position="419"/>
    </location>
</feature>
<feature type="helix" evidence="40">
    <location>
        <begin position="424"/>
        <end position="437"/>
    </location>
</feature>
<feature type="turn" evidence="40">
    <location>
        <begin position="441"/>
        <end position="443"/>
    </location>
</feature>
<feature type="helix" evidence="40">
    <location>
        <begin position="444"/>
        <end position="450"/>
    </location>
</feature>
<feature type="helix" evidence="40">
    <location>
        <begin position="453"/>
        <end position="455"/>
    </location>
</feature>
<feature type="turn" evidence="41">
    <location>
        <begin position="456"/>
        <end position="458"/>
    </location>
</feature>
<feature type="strand" evidence="41">
    <location>
        <begin position="459"/>
        <end position="461"/>
    </location>
</feature>
<feature type="helix" evidence="40">
    <location>
        <begin position="464"/>
        <end position="468"/>
    </location>
</feature>
<feature type="helix" evidence="40">
    <location>
        <begin position="471"/>
        <end position="482"/>
    </location>
</feature>
<feature type="helix" evidence="40">
    <location>
        <begin position="495"/>
        <end position="498"/>
    </location>
</feature>
<feature type="helix" evidence="40">
    <location>
        <begin position="499"/>
        <end position="501"/>
    </location>
</feature>
<feature type="helix" evidence="40">
    <location>
        <begin position="505"/>
        <end position="507"/>
    </location>
</feature>
<feature type="helix" evidence="40">
    <location>
        <begin position="513"/>
        <end position="518"/>
    </location>
</feature>
<feature type="helix" evidence="40">
    <location>
        <begin position="529"/>
        <end position="536"/>
    </location>
</feature>
<feature type="turn" evidence="40">
    <location>
        <begin position="537"/>
        <end position="539"/>
    </location>
</feature>
<gene>
    <name evidence="27 28" type="primary">tcsL</name>
</gene>
<reference key="1">
    <citation type="journal article" date="1995" name="Gene">
        <title>Cloning and characterization of the cytotoxin L-encoding gene of Clostridium sordellii: homology with Clostridium difficile cytotoxin B.</title>
        <authorList>
            <person name="Green G.A."/>
            <person name="Schue V."/>
            <person name="Monteil H."/>
        </authorList>
    </citation>
    <scope>NUCLEOTIDE SEQUENCE [GENOMIC DNA]</scope>
    <source>
        <strain>6018 / IP82</strain>
    </source>
</reference>
<reference key="2">
    <citation type="journal article" date="1996" name="Biochem. Biophys. Res. Commun.">
        <title>The ras-related protein Ral is monoglucosylated by Clostridium sordellii lethal toxin.</title>
        <authorList>
            <person name="Hofmann F."/>
            <person name="Rex G."/>
            <person name="Aktories K."/>
            <person name="Just I."/>
        </authorList>
    </citation>
    <scope>FUNCTION (GLUCOSYLTRANSFERASE TCSL)</scope>
    <scope>CATALYTIC ACTIVITY (GLUCOSYLTRANSFERASE TCSL)</scope>
    <source>
        <strain>6018 / IP82</strain>
    </source>
</reference>
<reference key="3">
    <citation type="journal article" date="1996" name="J. Biol. Chem.">
        <title>Inactivation of Ras by Clostridium sordellii lethal toxin-catalyzed glucosylation.</title>
        <authorList>
            <person name="Just I."/>
            <person name="Selzer J."/>
            <person name="Hofmann F."/>
            <person name="Green G.A."/>
            <person name="Aktories K."/>
        </authorList>
    </citation>
    <scope>FUNCTION (GLUCOSYLTRANSFERASE TCSL)</scope>
    <scope>CATALYTIC ACTIVITY (GLUCOSYLTRANSFERASE TCSL)</scope>
    <scope>COFACTOR (GLUCOSYLTRANSFERASE TCSL)</scope>
</reference>
<reference key="4">
    <citation type="journal article" date="1996" name="J. Biol. Chem.">
        <title>Ras, Rap, and Rac small GTP-binding proteins are targets for Clostridium sordellii lethal toxin glucosylation.</title>
        <authorList>
            <person name="Popoff M.R."/>
            <person name="Chaves-Olarte E."/>
            <person name="Lemichez E."/>
            <person name="von Eichel-Streiber C."/>
            <person name="Thelestam M."/>
            <person name="Chardin P."/>
            <person name="Cussac D."/>
            <person name="Antonny B."/>
            <person name="Chavrier P."/>
            <person name="Flatau G."/>
            <person name="Giry M."/>
            <person name="de Gunzburg J."/>
            <person name="Boquet P."/>
        </authorList>
    </citation>
    <scope>FUNCTION (GLUCOSYLTRANSFERASE TCSL)</scope>
    <scope>CATALYTIC ACTIVITY (GLUCOSYLTRANSFERASE TCSL)</scope>
    <scope>SUBCELLULAR LOCATION (GLUCOSYLTRANSFERASE TCSL)</scope>
    <source>
        <strain>6018 / IP82</strain>
    </source>
</reference>
<reference key="5">
    <citation type="journal article" date="1998" name="J. Biol. Chem.">
        <title>Functional consequences of monoglucosylation of Ha-Ras at effector domain amino acid threonine 35.</title>
        <authorList>
            <person name="Herrmann C."/>
            <person name="Ahmadian M.R."/>
            <person name="Hofmann F."/>
            <person name="Just I."/>
        </authorList>
    </citation>
    <scope>FUNCTION (GLUCOSYLTRANSFERASE TCSL)</scope>
    <scope>CATALYTIC ACTIVITY (GLUCOSYLTRANSFERASE TCSL)</scope>
    <source>
        <strain>6018 / IP82</strain>
    </source>
</reference>
<reference key="6">
    <citation type="journal article" date="2007" name="Biochem. Biophys. Res. Commun.">
        <title>Critical intermediate steps in Clostridium sordellii lethal toxin-induced apoptosis.</title>
        <authorList>
            <person name="Voth D.E."/>
            <person name="Ballard J.D."/>
        </authorList>
    </citation>
    <scope>FUNCTION (GLUCOSYLTRANSFERASE TCSL)</scope>
</reference>
<reference key="7">
    <citation type="journal article" date="2007" name="J. Biol. Chem.">
        <title>Clostridium difficile glucosyltransferase toxin B-essential amino acids for substrate binding.</title>
        <authorList>
            <person name="Jank T."/>
            <person name="Giesemann T."/>
            <person name="Aktories K."/>
        </authorList>
    </citation>
    <scope>FUNCTION (GLUCOSYLTRANSFERASE TCSL)</scope>
    <scope>CATALYTIC ACTIVITY (GLUCOSYLTRANSFERASE TCSL)</scope>
    <source>
        <strain>6018 / IP82</strain>
    </source>
</reference>
<reference key="8">
    <citation type="journal article" date="2007" name="Nature">
        <title>Autocatalytic cleavage of Clostridium difficile toxin B.</title>
        <authorList>
            <person name="Reineke J."/>
            <person name="Tenzer S."/>
            <person name="Rupnik M."/>
            <person name="Koschinski A."/>
            <person name="Hasselmayer O."/>
            <person name="Schrattenholz A."/>
            <person name="Schild H."/>
            <person name="von Eichel-Streiber C."/>
        </authorList>
    </citation>
    <scope>FUNCTION (CYTOTOXIN-L)</scope>
    <scope>ACTIVITY REGULATION (CYTOTOXIN-L)</scope>
    <scope>PROTEOLYTIC CLEAVAGE (CYTOTOXIN-L)</scope>
</reference>
<reference key="9">
    <citation type="journal article" date="2009" name="FEBS Lett.">
        <title>Distinct kinetics of (H/K/N)Ras glucosylation and Rac1 glucosylation catalysed by Clostridium sordellii lethal toxin.</title>
        <authorList>
            <person name="Huelsenbeck S.C."/>
            <person name="Klose I."/>
            <person name="Reichenbach M."/>
            <person name="Huelsenbeck J."/>
            <person name="Genth H."/>
        </authorList>
    </citation>
    <scope>FUNCTION (GLUCOSYLTRANSFERASE TCSL)</scope>
    <scope>CATALYTIC ACTIVITY (GLUCOSYLTRANSFERASE TCSL)</scope>
    <source>
        <strain>6018 / IP82</strain>
    </source>
</reference>
<reference key="10">
    <citation type="journal article" date="2010" name="Anaerobe">
        <title>Lethal toxin is a critical determinant of rapid mortality in rodent models of Clostridium sordellii endometritis.</title>
        <authorList>
            <person name="Hao Y."/>
            <person name="Senn T."/>
            <person name="Opp J.S."/>
            <person name="Young V.B."/>
            <person name="Thiele T."/>
            <person name="Srinivas G."/>
            <person name="Huang S.K."/>
            <person name="Aronoff D.M."/>
        </authorList>
    </citation>
    <scope>FUNCTION</scope>
</reference>
<reference key="11">
    <citation type="journal article" date="2014" name="Cell. Microbiol.">
        <title>Haemorrhagic toxin and lethal toxin from Clostridium sordellii strain vpi9048: molecular characterization and comparative analysis of substrate specificity of the large clostridial glucosylating toxins.</title>
        <authorList>
            <person name="Genth H."/>
            <person name="Pauillac S."/>
            <person name="Schelle I."/>
            <person name="Bouvet P."/>
            <person name="Bouchier C."/>
            <person name="Varela-Chavez C."/>
            <person name="Just I."/>
            <person name="Popoff M.R."/>
        </authorList>
    </citation>
    <scope>FUNCTION (GLUCOSYLTRANSFERASE TCSL)</scope>
    <scope>CATALYTIC ACTIVITY (GLUCOSYLTRANSFERASE TCSL)</scope>
    <source>
        <strain>6018 / IP82</strain>
    </source>
</reference>
<reference key="12">
    <citation type="journal article" date="2014" name="Nature">
        <title>Innate immune sensing of bacterial modifications of Rho GTPases by the Pyrin inflammasome.</title>
        <authorList>
            <person name="Xu H."/>
            <person name="Yang J."/>
            <person name="Gao W."/>
            <person name="Li L."/>
            <person name="Li P."/>
            <person name="Zhang L."/>
            <person name="Gong Y.N."/>
            <person name="Peng X."/>
            <person name="Xi J.J."/>
            <person name="Chen S."/>
            <person name="Wang F."/>
            <person name="Shao F."/>
        </authorList>
    </citation>
    <scope>FUNCTION</scope>
    <scope>CATALYTIC ACTIVITY (GLUCOSYLTRANSFERASE TCSL)</scope>
    <scope>MUTAGENESIS OF 286-ASP--ASP-288</scope>
</reference>
<reference key="13">
    <citation type="journal article" date="2015" name="Cell. Microbiol.">
        <title>The catalytic domains of Clostridium sordellii lethal toxin and related large clostridial glucosylating toxins specifically recognize the negatively charged phospholipids phosphatidylserine and phosphatidic acid.</title>
        <authorList>
            <person name="Varela Chavez C."/>
            <person name="Hoos S."/>
            <person name="Haustant G.M."/>
            <person name="Chenal A."/>
            <person name="England P."/>
            <person name="Blondel A."/>
            <person name="Pauillac S."/>
            <person name="Lacy D.B."/>
            <person name="Popoff M.R."/>
        </authorList>
    </citation>
    <scope>SUBCELLULAR LOCATION (GLUCOSYLTRANSFERASE TCSL)</scope>
    <source>
        <strain>6018 / IP82</strain>
    </source>
</reference>
<reference key="14">
    <citation type="journal article" date="2016" name="MSphere">
        <title>Clostridium sordellii lethal-toxin autoprocessing and membrane localization activities drive GTPase glucosylation profiles in endothelial cells.</title>
        <authorList>
            <person name="Craven R."/>
            <person name="Lacy D.B."/>
        </authorList>
    </citation>
    <scope>FUNCTION (CYTOTOXIN-L)</scope>
    <scope>FUNCTION (GLUCOSYLTRANSFERASE TCSL)</scope>
    <scope>CATALYTIC ACTIVITY (GLUCOSYLTRANSFERASE TCSL)</scope>
    <scope>PROTEOLYTIC CLEAVAGE (CYTOTOXIN-L)</scope>
    <scope>SUBCELLULAR LOCATION (GLUCOSYLTRANSFERASE TCSL)</scope>
    <scope>MUTAGENESIS OF 17-PHE-ARG-18; 286-ASP--ASP-288 AND CYS-698</scope>
    <source>
        <strain>JGS6382</strain>
    </source>
</reference>
<reference key="15">
    <citation type="journal article" date="2016" name="Toxins">
        <title>The tip of the four N-terminal alpha-helices of Clostridium sordellii lethal toxin contains the interaction site with membrane phosphatidylserine facilitating small GTPases glucosylation.</title>
        <authorList>
            <person name="Varela Chavez C."/>
            <person name="Haustant G.M."/>
            <person name="Baron B."/>
            <person name="England P."/>
            <person name="Chenal A."/>
            <person name="Pauillac S."/>
            <person name="Blondel A."/>
            <person name="Popoff M.R."/>
        </authorList>
    </citation>
    <scope>FUNCTION (GLUCOSYLTRANSFERASE TCSL)</scope>
    <scope>CATALYTIC ACTIVITY (GLUCOSYLTRANSFERASE TCSL)</scope>
    <scope>SUBCELLULAR LOCATION (GLUCOSYLTRANSFERASE TCSL)</scope>
    <scope>DOMAIN (GLUCOSYLTRANSFERASE TCSL)</scope>
    <scope>MUTAGENESIS OF GLN-10; LYS-11; TYR-14; VAL-15; LYS-16; PHE-17; ARG-18; GLN-20; SER-38; ARG-68; TYR-78 AND 286-ASP--ASP-288</scope>
</reference>
<reference key="16">
    <citation type="journal article" date="2016" name="Toxins">
        <title>Metal ion activation of clostridium sordellii lethal toxin and Clostridium difficile toxin B.</title>
        <authorList>
            <person name="Genth H."/>
            <person name="Schelle I."/>
            <person name="Just I."/>
        </authorList>
    </citation>
    <scope>COFACTOR (GLUCOSYLTRANSFERASE TCSL)</scope>
    <source>
        <strain>6018 / IP82</strain>
    </source>
</reference>
<reference key="17">
    <citation type="journal article" date="2018" name="Front. Microbiol.">
        <title>Difference in mono-O-glucosylation of Ras subtype GTPases between toxin A and toxin B from Clostridioides difficile strain 10463 and lethal toxin from Clostridium sordellii strain 6018.</title>
        <authorList>
            <person name="Genth H."/>
            <person name="Junemann J."/>
            <person name="Laemmerhirt C.M."/>
            <person name="Luecke A.C."/>
            <person name="Schelle I."/>
            <person name="Just I."/>
            <person name="Gerhard R."/>
            <person name="Pich A."/>
        </authorList>
    </citation>
    <scope>FUNCTION (GLUCOSYLTRANSFERASE TCSL)</scope>
    <scope>CATALYTIC ACTIVITY (GLUCOSYLTRANSFERASE TCSL)</scope>
    <source>
        <strain>6018 / IP82</strain>
    </source>
</reference>
<reference key="18">
    <citation type="journal article" date="2018" name="Toxicon">
        <title>Clostridium difficile and Clostridium sordellii toxins, proinflammatory versus anti-inflammatory response.</title>
        <authorList>
            <person name="Popoff M.R."/>
        </authorList>
    </citation>
    <scope>REVIEW</scope>
</reference>
<reference key="19">
    <citation type="journal article" date="2020" name="Cell Host Microbe">
        <title>Genome-wide CRISPR screen identifies semaphorin 6A and 6B as receptors for Paeniclostridium sordellii toxin TcsL.</title>
        <authorList>
            <person name="Tian S."/>
            <person name="Liu Y."/>
            <person name="Wu H."/>
            <person name="Liu H."/>
            <person name="Zeng J."/>
            <person name="Choi M.Y."/>
            <person name="Chen H."/>
            <person name="Gerhard R."/>
            <person name="Dong M."/>
        </authorList>
    </citation>
    <scope>INTERACTION WITH HOST SEMA6A AND SEMA6B (CYTOTOXIN-L)</scope>
    <source>
        <strain>6018 / IP82</strain>
    </source>
</reference>
<reference evidence="38" key="20">
    <citation type="journal article" date="2008" name="FEBS Lett.">
        <title>Inhibition of the glucosyltransferase activity of clostridial Rho/Ras-glucosylating toxins by castanospermine.</title>
        <authorList>
            <person name="Jank T."/>
            <person name="Ziegler M.O."/>
            <person name="Schulz G.E."/>
            <person name="Aktories K."/>
        </authorList>
    </citation>
    <scope>X-RAY CRYSTALLOGRAPHY (2.31 ANGSTROMS) OF 1-546 IN COMPLEX WITH CALCIUM AND UDP</scope>
    <source>
        <strain>6018 / IP82</strain>
    </source>
</reference>
<reference evidence="36 37" key="21">
    <citation type="journal article" date="2008" name="J. Mol. Biol.">
        <title>Conformational changes and reaction of clostridial glycosylating toxins.</title>
        <authorList>
            <person name="Ziegler M.O."/>
            <person name="Jank T."/>
            <person name="Aktories K."/>
            <person name="Schulz G.E."/>
        </authorList>
    </citation>
    <scope>X-RAY CRYSTALLOGRAPHY (2.30 ANGSTROMS) OF 1-546 IN COMPLEX WITH UDP-ALPHA-D-GLUCOSE AND MANGANESE</scope>
    <source>
        <strain>6018 / IP82</strain>
    </source>
</reference>
<comment type="function">
    <molecule>Cytotoxin-L</molecule>
    <text evidence="3 8 13 16 20 22 29">Precursor of a cytotoxin that targets the vascular endothelium, inducing an anti-inflammatory effect and resulting in lethal toxic shock syndrome (PubMed:19527792, PubMed:24919149, PubMed:29146177). TcsL constitutes the main toxin that mediates the pathology of P.sordellii infection, an anaerobic Gram-positive bacterium found in soil and in the gastrointestinal and vaginal tracts of animals and humans; although the majority of carriers are asymptomatic, pathogenic P.sordellii infections arise rapidly and are highly lethal (PubMed:29146177). This form constitutes the precursor of the toxin: it enters into host cells and mediates autoprocessing to release the active toxin (Glucosyltransferase TcsL) into the host cytosol (PubMed:17334356, PubMed:27303685, PubMed:32302524). Targets vascular endothelium by binding to the semaphorin proteins SEMA6A and SEMA6B, and enters host cells via clathrin-mediated endocytosis (PubMed:32302524). Once entered into host cells, acidification in the endosome promotes the membrane insertion of the translocation region and formation of a pore, leading to translocation of the GT44 and peptidase C80 domains across the endosomal membrane (By similarity). This activates the peptidase C80 domain and autocatalytic processing, releasing the N-terminal part (Glucosyltransferase TcsL), which constitutes the active part of the toxin, in the cytosol (PubMed:17334356, PubMed:27303685).</text>
</comment>
<comment type="function">
    <molecule>Glucosyltransferase TcsL</molecule>
    <text evidence="9 10 14 15 16 18 20 21 23 24 25 26 29">Active form of the toxin, which is released into the host cytosol following autoprocessing and inactivates small GTPases (PubMed:17901056, PubMed:19744486, PubMed:24905543, PubMed:24919149, PubMed:27023605, PubMed:27303685, PubMed:30622517, PubMed:8626575, PubMed:8626586, PubMed:9632667). Acts by mediating monoglucosylation of small GTPases of the Ras (H-Ras/HRAS, K-Ras/KRAS, N-Ras/NRAS and Ral/RALA) family in host cells at the conserved threonine residue located in the switch I region ('Thr-37/35'), using UDP-alpha-D-glucose as the sugar donor (PubMed:17901056, PubMed:19744486, PubMed:24905543, PubMed:24919149, PubMed:27023605, PubMed:30622517, PubMed:8626575, PubMed:8626586, PubMed:8858106, PubMed:9632667). Also able to catalyze monoglucosylation of some members of the Rho family (Rac1 and Rap2A), but with less efficiency than with Ras proteins (PubMed:19744486, PubMed:24905543, PubMed:8626586, PubMed:9632667). Monoglucosylation of host small GTPases completely prevents the recognition of the downstream effector, blocking the GTPases in their inactive form and leading to apoptosis (PubMed:17910886, PubMed:8626586, PubMed:9632667). Induces an anti-inflammatory effect, mainly by inactivating Ras proteins which results in blockage of the cell cycle and killing of immune cells (PubMed:17910886, PubMed:24919149). The absence or moderate local inflammatory response allows C.sordellii spreading in deep tissues, production of toxin which is released in the general circulation and causes a toxic shock syndrome (PubMed:24919149, PubMed:29146177).</text>
</comment>
<comment type="catalytic activity">
    <molecule>Glucosyltransferase TcsL</molecule>
    <reaction evidence="9 14 15 16 18 20 21 23 24 25 26">
        <text>L-threonyl-[protein] + UDP-alpha-D-glucose = 3-O-(alpha-D-glucosyl)-L-threonyl-[protein] + UDP + H(+)</text>
        <dbReference type="Rhea" id="RHEA:64684"/>
        <dbReference type="Rhea" id="RHEA-COMP:11060"/>
        <dbReference type="Rhea" id="RHEA-COMP:16656"/>
        <dbReference type="ChEBI" id="CHEBI:15378"/>
        <dbReference type="ChEBI" id="CHEBI:30013"/>
        <dbReference type="ChEBI" id="CHEBI:58223"/>
        <dbReference type="ChEBI" id="CHEBI:58885"/>
        <dbReference type="ChEBI" id="CHEBI:156085"/>
    </reaction>
    <physiologicalReaction direction="left-to-right" evidence="9 14 15 16 18 20 21 23 24 25 26">
        <dbReference type="Rhea" id="RHEA:64685"/>
    </physiologicalReaction>
</comment>
<comment type="cofactor">
    <molecule>Cytotoxin-L</molecule>
    <cofactor evidence="3">
        <name>Zn(2+)</name>
        <dbReference type="ChEBI" id="CHEBI:29105"/>
    </cofactor>
    <text evidence="3">Binds 1 Zn(2+) ion per subunit. Zn(2+) is required for autocatalytic cleavage.</text>
</comment>
<comment type="cofactor">
    <molecule>Glucosyltransferase TcsL</molecule>
    <cofactor evidence="19 23">
        <name>Mn(2+)</name>
        <dbReference type="ChEBI" id="CHEBI:29035"/>
    </cofactor>
    <cofactor evidence="19">
        <name>Mg(2+)</name>
        <dbReference type="ChEBI" id="CHEBI:18420"/>
    </cofactor>
    <text evidence="19 23">Has higher activity with Mn(2+), but most likely uses Mg(2+) in host cells (PubMed:27089365). Mn(2+) or Mg(2+) are required for glucosyltransferase activity (PubMed:27089365, PubMed:8626575).</text>
</comment>
<comment type="activity regulation">
    <molecule>Cytotoxin-L</molecule>
    <text evidence="8">Protease activity is activated upon binding to 1D-myo-inositol hexakisphosphate (InsP6), which induces conformational reorganization.</text>
</comment>
<comment type="subunit">
    <molecule>Cytotoxin-L</molecule>
    <text evidence="4 22">Homomultimer; forms an inactive homomultimer at pH 8, which dissociates at pH 4, leading to cytotoxicity (By similarity). Interacts with host SEMA6A; interaction promotes toxin entry into host cell (PubMed:32302524). Interacts with host SEMA6B; interaction promotes toxin entry into host cell (PubMed:32302524).</text>
</comment>
<comment type="subcellular location">
    <molecule>Cytotoxin-L</molecule>
    <subcellularLocation>
        <location evidence="3">Secreted</location>
    </subcellularLocation>
    <subcellularLocation>
        <location evidence="3">Host endosome membrane</location>
    </subcellularLocation>
    <text evidence="3 8">Secreted from P.sordellii cell into the extracellular environment via help of holin-like protein TcdE/UtxA (By similarity). Binds to the cell surface receptors via the receptor-binding region and enters the cells via clathrin-mediated endocytosis (By similarity). Acidification in the endosome triggers conformational changes that promote the membrane insertion of the translocation region, allowing formation of a pore, leading to translocation of the GT44 and peptidase C80 domains across the endosomal membrane (By similarity). 1D-myo-inositol hexakisphosphate-binding (InsP6) activates the peptidase C80 domain and autoprocessing, generating the Glucosyltransferase TcsL form, which is released in the host cytosol (PubMed:17334356).</text>
</comment>
<comment type="subcellular location">
    <molecule>Glucosyltransferase TcsL</molecule>
    <subcellularLocation>
        <location evidence="35">Host cytoplasm</location>
        <location evidence="35">Host cytosol</location>
    </subcellularLocation>
    <subcellularLocation>
        <location evidence="18 20">Host cell membrane</location>
        <topology evidence="18">Peripheral membrane protein</topology>
        <orientation evidence="18">Cytoplasmic side</orientation>
    </subcellularLocation>
    <text evidence="17 18">Binding to phospholipids, such as phosphatidylserine and phosphatidic acid promotes localization to the inner face of the cell membrane close to its membrane anchored substrates (small GTPases).</text>
</comment>
<comment type="domain">
    <molecule>Glucosyltransferase TcsL</molecule>
    <text evidence="29">Consists of 4 functional domains: (1) the N-terminal GT44 domain (glucosyltransferase, also named GTD), which mediates glucosylation of host small GTPases, (2) an autoprocessing region that catalyzes autoprocessing to release the N-terminal GT44 domain in the host cytosol, (3) the translocation region that forms a pore to promote translocation of the GT44 and peptidase C80 domains across the endosomal membrane and (4) the receptor-binding (CROPS) region that mediates binding to host cells and contribute to entry into cells.</text>
</comment>
<comment type="domain">
    <molecule>Cytotoxin-L</molecule>
    <text evidence="3">The receptor-binding (CROPS) region is dynamic and can have open and closed conformations depending of the pH: has an open conformation at endosomal pH and a closed conformation at neutral pH.</text>
</comment>
<comment type="domain">
    <molecule>Cytotoxin-L</molecule>
    <text evidence="2">The cell wall-binding repeats bind carbohydrates, probably contributing to entry into cells.</text>
</comment>
<comment type="domain">
    <molecule>Glucosyltransferase TcsL</molecule>
    <text evidence="18">The four-helical bundle region mediates binding to phospholipids, such as phosphatidylserine and phosphatidic acid (PubMed:27023605). This promotes localization to the inner face of the cell membrane close to small GTPases (PubMed:27023605).</text>
</comment>
<comment type="PTM">
    <molecule>Cytotoxin-L</molecule>
    <text evidence="8 20">Undergoes autocatalytic cleavage to release the N-terminal part (Glucosyltransferase TcsL), which constitutes the active part of the toxin, in the host cytosol (PubMed:17334356, PubMed:27303685). 1D-myo-inositol hexakisphosphate-binding (InsP6) activates the peptidase C80 domain and promotes autoprocessing (PubMed:17334356).</text>
</comment>
<comment type="similarity">
    <text evidence="33">Belongs to the clostridial glucosylating toxin (LCGT) family.</text>
</comment>
<name>TCSL1_PARSO</name>